<dbReference type="EC" id="2.4.2.53"/>
<dbReference type="EMBL" id="AF036677">
    <property type="protein sequence ID" value="AAC04771.1"/>
    <property type="molecule type" value="Genomic_DNA"/>
</dbReference>
<dbReference type="EMBL" id="AE006468">
    <property type="protein sequence ID" value="AAL21199.1"/>
    <property type="molecule type" value="Genomic_DNA"/>
</dbReference>
<dbReference type="RefSeq" id="NP_461240.1">
    <property type="nucleotide sequence ID" value="NC_003197.2"/>
</dbReference>
<dbReference type="RefSeq" id="WP_000458893.1">
    <property type="nucleotide sequence ID" value="NC_003197.2"/>
</dbReference>
<dbReference type="PDB" id="8VXH">
    <property type="method" value="EM"/>
    <property type="resolution" value="2.79 A"/>
    <property type="chains" value="A/B/C/D=1-327"/>
</dbReference>
<dbReference type="PDB" id="9ASC">
    <property type="method" value="EM"/>
    <property type="resolution" value="2.96 A"/>
    <property type="chains" value="A/B/C/D=1-327"/>
</dbReference>
<dbReference type="PDB" id="9B77">
    <property type="method" value="EM"/>
    <property type="resolution" value="2.74 A"/>
    <property type="chains" value="A/B/C/D=1-327"/>
</dbReference>
<dbReference type="PDBsum" id="8VXH"/>
<dbReference type="PDBsum" id="9ASC"/>
<dbReference type="PDBsum" id="9B77"/>
<dbReference type="EMDB" id="EMD-43617"/>
<dbReference type="EMDB" id="EMD-43812"/>
<dbReference type="EMDB" id="EMD-44302"/>
<dbReference type="SMR" id="O52324"/>
<dbReference type="STRING" id="99287.STM2298"/>
<dbReference type="CAZy" id="GT2">
    <property type="family name" value="Glycosyltransferase Family 2"/>
</dbReference>
<dbReference type="PaxDb" id="99287-STM2298"/>
<dbReference type="GeneID" id="1253820"/>
<dbReference type="KEGG" id="stm:STM2298"/>
<dbReference type="PATRIC" id="fig|99287.12.peg.2433"/>
<dbReference type="HOGENOM" id="CLU_033536_0_0_6"/>
<dbReference type="OMA" id="KFLTRPM"/>
<dbReference type="PhylomeDB" id="O52324"/>
<dbReference type="BioCyc" id="SENT99287:STM2298-MONOMER"/>
<dbReference type="UniPathway" id="UPA00030"/>
<dbReference type="UniPathway" id="UPA00036">
    <property type="reaction ID" value="UER00495"/>
</dbReference>
<dbReference type="Proteomes" id="UP000001014">
    <property type="component" value="Chromosome"/>
</dbReference>
<dbReference type="GO" id="GO:0005886">
    <property type="term" value="C:plasma membrane"/>
    <property type="evidence" value="ECO:0000318"/>
    <property type="project" value="GO_Central"/>
</dbReference>
<dbReference type="GO" id="GO:0016780">
    <property type="term" value="F:phosphotransferase activity, for other substituted phosphate groups"/>
    <property type="evidence" value="ECO:0007669"/>
    <property type="project" value="UniProtKB-UniRule"/>
</dbReference>
<dbReference type="GO" id="GO:0099621">
    <property type="term" value="F:undecaprenyl-phosphate 4-deoxy-4-formamido-L-arabinose transferase activity"/>
    <property type="evidence" value="ECO:0000318"/>
    <property type="project" value="GO_Central"/>
</dbReference>
<dbReference type="GO" id="GO:0036108">
    <property type="term" value="P:4-amino-4-deoxy-alpha-L-arabinopyranosyl undecaprenyl phosphate biosynthetic process"/>
    <property type="evidence" value="ECO:0007669"/>
    <property type="project" value="UniProtKB-UniRule"/>
</dbReference>
<dbReference type="GO" id="GO:0009245">
    <property type="term" value="P:lipid A biosynthetic process"/>
    <property type="evidence" value="ECO:0007669"/>
    <property type="project" value="UniProtKB-UniRule"/>
</dbReference>
<dbReference type="GO" id="GO:0009103">
    <property type="term" value="P:lipopolysaccharide biosynthetic process"/>
    <property type="evidence" value="ECO:0007669"/>
    <property type="project" value="UniProtKB-UniRule"/>
</dbReference>
<dbReference type="GO" id="GO:0046677">
    <property type="term" value="P:response to antibiotic"/>
    <property type="evidence" value="ECO:0007669"/>
    <property type="project" value="UniProtKB-KW"/>
</dbReference>
<dbReference type="CDD" id="cd04187">
    <property type="entry name" value="DPM1_like_bac"/>
    <property type="match status" value="1"/>
</dbReference>
<dbReference type="FunFam" id="3.90.550.10:FF:000019">
    <property type="entry name" value="Undecaprenyl-phosphate 4-deoxy-4-formamido-L-arabinose transferase"/>
    <property type="match status" value="1"/>
</dbReference>
<dbReference type="Gene3D" id="3.90.550.10">
    <property type="entry name" value="Spore Coat Polysaccharide Biosynthesis Protein SpsA, Chain A"/>
    <property type="match status" value="1"/>
</dbReference>
<dbReference type="HAMAP" id="MF_01164">
    <property type="entry name" value="ArnC_transfer"/>
    <property type="match status" value="1"/>
</dbReference>
<dbReference type="InterPro" id="IPR022857">
    <property type="entry name" value="ArnC_tfrase"/>
</dbReference>
<dbReference type="InterPro" id="IPR001173">
    <property type="entry name" value="Glyco_trans_2-like"/>
</dbReference>
<dbReference type="InterPro" id="IPR050256">
    <property type="entry name" value="Glycosyltransferase_2"/>
</dbReference>
<dbReference type="InterPro" id="IPR029044">
    <property type="entry name" value="Nucleotide-diphossugar_trans"/>
</dbReference>
<dbReference type="NCBIfam" id="NF007986">
    <property type="entry name" value="PRK10714.1"/>
    <property type="match status" value="1"/>
</dbReference>
<dbReference type="PANTHER" id="PTHR48090:SF3">
    <property type="entry name" value="UNDECAPRENYL-PHOSPHATE 4-DEOXY-4-FORMAMIDO-L-ARABINOSE TRANSFERASE"/>
    <property type="match status" value="1"/>
</dbReference>
<dbReference type="PANTHER" id="PTHR48090">
    <property type="entry name" value="UNDECAPRENYL-PHOSPHATE 4-DEOXY-4-FORMAMIDO-L-ARABINOSE TRANSFERASE-RELATED"/>
    <property type="match status" value="1"/>
</dbReference>
<dbReference type="Pfam" id="PF00535">
    <property type="entry name" value="Glycos_transf_2"/>
    <property type="match status" value="1"/>
</dbReference>
<dbReference type="SUPFAM" id="SSF53448">
    <property type="entry name" value="Nucleotide-diphospho-sugar transferases"/>
    <property type="match status" value="1"/>
</dbReference>
<evidence type="ECO:0000250" key="1"/>
<evidence type="ECO:0000255" key="2"/>
<evidence type="ECO:0000269" key="3">
    <source>
    </source>
</evidence>
<evidence type="ECO:0000269" key="4">
    <source>
    </source>
</evidence>
<evidence type="ECO:0000269" key="5">
    <source>
    </source>
</evidence>
<evidence type="ECO:0000305" key="6"/>
<comment type="function">
    <text evidence="5">Catalyzes the transfer of 4-deoxy-4-formamido-L-arabinose from UDP to undecaprenyl phosphate. The modified arabinose is attached to lipid A and is required for resistance to polymyxin and cationic antimicrobial peptides. Plays an important role in pathogenesis by providing resistance to antimicrobial peptides within macrophages or at other anatomic sites encountered during infection.</text>
</comment>
<comment type="catalytic activity">
    <reaction>
        <text>UDP-4-deoxy-4-formamido-beta-L-arabinose + di-trans,octa-cis-undecaprenyl phosphate = 4-deoxy-4-formamido-alpha-L-arabinopyranosyl di-trans,octa-cis-undecaprenyl phosphate + UDP</text>
        <dbReference type="Rhea" id="RHEA:27722"/>
        <dbReference type="ChEBI" id="CHEBI:58223"/>
        <dbReference type="ChEBI" id="CHEBI:58709"/>
        <dbReference type="ChEBI" id="CHEBI:58909"/>
        <dbReference type="ChEBI" id="CHEBI:60392"/>
        <dbReference type="EC" id="2.4.2.53"/>
    </reaction>
</comment>
<comment type="pathway">
    <text>Glycolipid biosynthesis; 4-amino-4-deoxy-alpha-L-arabinose undecaprenyl phosphate biosynthesis; 4-amino-4-deoxy-alpha-L-arabinose undecaprenyl phosphate from UDP-4-deoxy-4-formamido-beta-L-arabinose and undecaprenyl phosphate: step 1/2.</text>
</comment>
<comment type="pathway">
    <text>Bacterial outer membrane biogenesis; lipopolysaccharide biosynthesis.</text>
</comment>
<comment type="subcellular location">
    <subcellularLocation>
        <location evidence="1">Cell inner membrane</location>
        <topology evidence="1">Multi-pass membrane protein</topology>
    </subcellularLocation>
</comment>
<comment type="induction">
    <text evidence="3 4">Induced by BasR.</text>
</comment>
<comment type="similarity">
    <text evidence="6">Belongs to the glycosyltransferase 2 family.</text>
</comment>
<reference key="1">
    <citation type="journal article" date="1998" name="Mol. Microbiol.">
        <title>PmrA-PmrB-regulated genes necessary for 4-aminoarabinose lipid A modification and polymyxin resistance.</title>
        <authorList>
            <person name="Gunn J.S."/>
            <person name="Lim K.B."/>
            <person name="Krueger J."/>
            <person name="Kim K."/>
            <person name="Guo L."/>
            <person name="Hackett M."/>
            <person name="Miller S.I."/>
        </authorList>
    </citation>
    <scope>NUCLEOTIDE SEQUENCE [GENOMIC DNA]</scope>
    <scope>FUNCTION</scope>
    <source>
        <strain>ATCC 14028s / SGSG 2262</strain>
    </source>
</reference>
<reference key="2">
    <citation type="journal article" date="2001" name="Nature">
        <title>Complete genome sequence of Salmonella enterica serovar Typhimurium LT2.</title>
        <authorList>
            <person name="McClelland M."/>
            <person name="Sanderson K.E."/>
            <person name="Spieth J."/>
            <person name="Clifton S.W."/>
            <person name="Latreille P."/>
            <person name="Courtney L."/>
            <person name="Porwollik S."/>
            <person name="Ali J."/>
            <person name="Dante M."/>
            <person name="Du F."/>
            <person name="Hou S."/>
            <person name="Layman D."/>
            <person name="Leonard S."/>
            <person name="Nguyen C."/>
            <person name="Scott K."/>
            <person name="Holmes A."/>
            <person name="Grewal N."/>
            <person name="Mulvaney E."/>
            <person name="Ryan E."/>
            <person name="Sun H."/>
            <person name="Florea L."/>
            <person name="Miller W."/>
            <person name="Stoneking T."/>
            <person name="Nhan M."/>
            <person name="Waterston R."/>
            <person name="Wilson R.K."/>
        </authorList>
    </citation>
    <scope>NUCLEOTIDE SEQUENCE [LARGE SCALE GENOMIC DNA]</scope>
    <source>
        <strain>LT2 / SGSC1412 / ATCC 700720</strain>
    </source>
</reference>
<reference key="3">
    <citation type="journal article" date="1999" name="J. Biol. Chem.">
        <title>Molecular characterization of the PmrA regulon.</title>
        <authorList>
            <person name="Woesten M.M.S.M."/>
            <person name="Groisman E.A."/>
        </authorList>
    </citation>
    <scope>INDUCTION</scope>
    <source>
        <strain>ATCC 14028s / SGSG 2262</strain>
    </source>
</reference>
<reference key="4">
    <citation type="journal article" date="2000" name="Cell">
        <title>A signal transduction system that responds to extracellular iron.</title>
        <authorList>
            <person name="Woesten M.M.S.M."/>
            <person name="Kox L.F.F."/>
            <person name="Chamnongpol S."/>
            <person name="Soncini F.C."/>
            <person name="Groisman E.A."/>
        </authorList>
    </citation>
    <scope>INDUCTION</scope>
</reference>
<gene>
    <name type="primary">arnC</name>
    <name type="synonym">pbgP2</name>
    <name type="synonym">pmrF</name>
    <name type="ordered locus">STM2298</name>
</gene>
<feature type="chain" id="PRO_0000059203" description="Undecaprenyl-phosphate 4-deoxy-4-formamido-L-arabinose transferase">
    <location>
        <begin position="1"/>
        <end position="327"/>
    </location>
</feature>
<feature type="topological domain" description="Cytoplasmic" evidence="2">
    <location>
        <begin position="1"/>
        <end position="235"/>
    </location>
</feature>
<feature type="transmembrane region" description="Helical" evidence="2">
    <location>
        <begin position="236"/>
        <end position="256"/>
    </location>
</feature>
<feature type="topological domain" description="Periplasmic" evidence="2">
    <location>
        <begin position="257"/>
        <end position="269"/>
    </location>
</feature>
<feature type="transmembrane region" description="Helical" evidence="2">
    <location>
        <begin position="270"/>
        <end position="290"/>
    </location>
</feature>
<feature type="topological domain" description="Cytoplasmic" evidence="2">
    <location>
        <begin position="291"/>
        <end position="327"/>
    </location>
</feature>
<protein>
    <recommendedName>
        <fullName>Undecaprenyl-phosphate 4-deoxy-4-formamido-L-arabinose transferase</fullName>
        <ecNumber>2.4.2.53</ecNumber>
    </recommendedName>
    <alternativeName>
        <fullName>Polymyxin resistance protein PmrF</fullName>
    </alternativeName>
    <alternativeName>
        <fullName>Undecaprenyl-phosphate Ara4FN transferase</fullName>
        <shortName>Ara4FN transferase</shortName>
    </alternativeName>
</protein>
<organism>
    <name type="scientific">Salmonella typhimurium (strain LT2 / SGSC1412 / ATCC 700720)</name>
    <dbReference type="NCBI Taxonomy" id="99287"/>
    <lineage>
        <taxon>Bacteria</taxon>
        <taxon>Pseudomonadati</taxon>
        <taxon>Pseudomonadota</taxon>
        <taxon>Gammaproteobacteria</taxon>
        <taxon>Enterobacterales</taxon>
        <taxon>Enterobacteriaceae</taxon>
        <taxon>Salmonella</taxon>
    </lineage>
</organism>
<sequence length="327" mass="36516">MFDAAPIKKVSVVIPVYNEQESLPELIRRTTTACESLGKAWEILLIDDGSSDSSAELMVKASQEADSHIISILLNRNYGQHAAIMAGFSHVSGDLIITLDADLQNPPEEIPRLVAKADEGFDVVGTVRQNRQDSLFRKSASKIINLLIQRTTGKAMGDYGCMLRAYRRPIIDTMLRCHERSTFIPILANIFARRATEIPVHHAEREFGDSKYSFMRLINLMYDLVTCLTTTPLRLLSLLGSVIAIGGFSLSVLLIVLRLALGPQWAAEGVFMLFAVLFTFIGAQFIGMGLLGEYIGRIYNDVRARPRYFVQQVIYPESTPFTEESHQ</sequence>
<name>ARNC_SALTY</name>
<accession>O52324</accession>
<accession>Q8ZNF2</accession>
<proteinExistence type="evidence at protein level"/>
<keyword id="KW-0002">3D-structure</keyword>
<keyword id="KW-0046">Antibiotic resistance</keyword>
<keyword id="KW-0997">Cell inner membrane</keyword>
<keyword id="KW-1003">Cell membrane</keyword>
<keyword id="KW-0328">Glycosyltransferase</keyword>
<keyword id="KW-0441">Lipid A biosynthesis</keyword>
<keyword id="KW-0444">Lipid biosynthesis</keyword>
<keyword id="KW-0443">Lipid metabolism</keyword>
<keyword id="KW-0448">Lipopolysaccharide biosynthesis</keyword>
<keyword id="KW-0472">Membrane</keyword>
<keyword id="KW-1185">Reference proteome</keyword>
<keyword id="KW-0808">Transferase</keyword>
<keyword id="KW-0812">Transmembrane</keyword>
<keyword id="KW-1133">Transmembrane helix</keyword>